<protein>
    <recommendedName>
        <fullName evidence="1">Photosystem II reaction center protein J</fullName>
        <shortName evidence="1">PSII-J</shortName>
    </recommendedName>
</protein>
<evidence type="ECO:0000255" key="1">
    <source>
        <dbReference type="HAMAP-Rule" id="MF_01305"/>
    </source>
</evidence>
<evidence type="ECO:0000256" key="2">
    <source>
        <dbReference type="SAM" id="MobiDB-lite"/>
    </source>
</evidence>
<evidence type="ECO:0000305" key="3"/>
<name>PSBJ_PROMM</name>
<dbReference type="EMBL" id="BX548175">
    <property type="protein sequence ID" value="CAE22074.1"/>
    <property type="molecule type" value="Genomic_DNA"/>
</dbReference>
<dbReference type="RefSeq" id="WP_011131265.1">
    <property type="nucleotide sequence ID" value="NC_005071.1"/>
</dbReference>
<dbReference type="SMR" id="Q7V4P9"/>
<dbReference type="KEGG" id="pmt:PMT_1899"/>
<dbReference type="eggNOG" id="ENOG5030SSF">
    <property type="taxonomic scope" value="Bacteria"/>
</dbReference>
<dbReference type="HOGENOM" id="CLU_2829784_0_0_3"/>
<dbReference type="OrthoDB" id="466474at2"/>
<dbReference type="Proteomes" id="UP000001423">
    <property type="component" value="Chromosome"/>
</dbReference>
<dbReference type="GO" id="GO:0009539">
    <property type="term" value="C:photosystem II reaction center"/>
    <property type="evidence" value="ECO:0007669"/>
    <property type="project" value="InterPro"/>
</dbReference>
<dbReference type="GO" id="GO:0031676">
    <property type="term" value="C:plasma membrane-derived thylakoid membrane"/>
    <property type="evidence" value="ECO:0007669"/>
    <property type="project" value="UniProtKB-SubCell"/>
</dbReference>
<dbReference type="GO" id="GO:0015979">
    <property type="term" value="P:photosynthesis"/>
    <property type="evidence" value="ECO:0007669"/>
    <property type="project" value="UniProtKB-UniRule"/>
</dbReference>
<dbReference type="Gene3D" id="6.10.250.2070">
    <property type="match status" value="1"/>
</dbReference>
<dbReference type="HAMAP" id="MF_01305">
    <property type="entry name" value="PSII_PsbJ"/>
    <property type="match status" value="1"/>
</dbReference>
<dbReference type="InterPro" id="IPR002682">
    <property type="entry name" value="PSII_PsbJ"/>
</dbReference>
<dbReference type="InterPro" id="IPR037267">
    <property type="entry name" value="PSII_PsbJ_sf"/>
</dbReference>
<dbReference type="NCBIfam" id="NF002722">
    <property type="entry name" value="PRK02565.1"/>
    <property type="match status" value="1"/>
</dbReference>
<dbReference type="Pfam" id="PF01788">
    <property type="entry name" value="PsbJ"/>
    <property type="match status" value="1"/>
</dbReference>
<dbReference type="SUPFAM" id="SSF161021">
    <property type="entry name" value="Photosystem II reaction center protein J, PsbJ"/>
    <property type="match status" value="1"/>
</dbReference>
<comment type="function">
    <text evidence="1">One of the components of the core complex of photosystem II (PSII). PSII is a light-driven water:plastoquinone oxidoreductase that uses light energy to abstract electrons from H(2)O, generating O(2) and a proton gradient subsequently used for ATP formation. It consists of a core antenna complex that captures photons, and an electron transfer chain that converts photonic excitation into a charge separation.</text>
</comment>
<comment type="subunit">
    <text evidence="3">PSII is composed of 1 copy each of membrane proteins PsbA, PsbB, PsbC, PsbD, PsbE, PsbF, PsbH, PsbI, PsbJ, PsbK, PsbL, PsbM, PsbT, PsbX, PsbY, Psb30/Ycf12, peripheral proteins PsbO, CyanoQ (PsbQ), PsbU, PsbV and a large number of cofactors. It forms dimeric complexes.</text>
</comment>
<comment type="subcellular location">
    <subcellularLocation>
        <location evidence="1">Cellular thylakoid membrane</location>
        <topology evidence="1">Single-pass membrane protein</topology>
    </subcellularLocation>
</comment>
<comment type="similarity">
    <text evidence="1">Belongs to the PsbJ family.</text>
</comment>
<reference key="1">
    <citation type="journal article" date="2003" name="Nature">
        <title>Genome divergence in two Prochlorococcus ecotypes reflects oceanic niche differentiation.</title>
        <authorList>
            <person name="Rocap G."/>
            <person name="Larimer F.W."/>
            <person name="Lamerdin J.E."/>
            <person name="Malfatti S."/>
            <person name="Chain P."/>
            <person name="Ahlgren N.A."/>
            <person name="Arellano A."/>
            <person name="Coleman M."/>
            <person name="Hauser L."/>
            <person name="Hess W.R."/>
            <person name="Johnson Z.I."/>
            <person name="Land M.L."/>
            <person name="Lindell D."/>
            <person name="Post A.F."/>
            <person name="Regala W."/>
            <person name="Shah M."/>
            <person name="Shaw S.L."/>
            <person name="Steglich C."/>
            <person name="Sullivan M.B."/>
            <person name="Ting C.S."/>
            <person name="Tolonen A."/>
            <person name="Webb E.A."/>
            <person name="Zinser E.R."/>
            <person name="Chisholm S.W."/>
        </authorList>
    </citation>
    <scope>NUCLEOTIDE SEQUENCE [LARGE SCALE GENOMIC DNA]</scope>
    <source>
        <strain>MIT 9313</strain>
    </source>
</reference>
<sequence length="65" mass="6880">MSTKLKGPDGRIPDRLPDGSPAVSWERRWTEGSLPLWLVATVGGMAVLSVLGLFFFGSFTGVGSA</sequence>
<organism>
    <name type="scientific">Prochlorococcus marinus (strain MIT 9313)</name>
    <dbReference type="NCBI Taxonomy" id="74547"/>
    <lineage>
        <taxon>Bacteria</taxon>
        <taxon>Bacillati</taxon>
        <taxon>Cyanobacteriota</taxon>
        <taxon>Cyanophyceae</taxon>
        <taxon>Synechococcales</taxon>
        <taxon>Prochlorococcaceae</taxon>
        <taxon>Prochlorococcus</taxon>
    </lineage>
</organism>
<gene>
    <name evidence="1" type="primary">psbJ</name>
    <name type="ordered locus">PMT_1899</name>
</gene>
<proteinExistence type="inferred from homology"/>
<keyword id="KW-0472">Membrane</keyword>
<keyword id="KW-0602">Photosynthesis</keyword>
<keyword id="KW-0604">Photosystem II</keyword>
<keyword id="KW-0674">Reaction center</keyword>
<keyword id="KW-1185">Reference proteome</keyword>
<keyword id="KW-0793">Thylakoid</keyword>
<keyword id="KW-0812">Transmembrane</keyword>
<keyword id="KW-1133">Transmembrane helix</keyword>
<accession>Q7V4P9</accession>
<feature type="chain" id="PRO_0000292230" description="Photosystem II reaction center protein J">
    <location>
        <begin position="1"/>
        <end position="65"/>
    </location>
</feature>
<feature type="transmembrane region" description="Helical" evidence="1">
    <location>
        <begin position="36"/>
        <end position="56"/>
    </location>
</feature>
<feature type="region of interest" description="Disordered" evidence="2">
    <location>
        <begin position="1"/>
        <end position="21"/>
    </location>
</feature>
<feature type="compositionally biased region" description="Basic and acidic residues" evidence="2">
    <location>
        <begin position="1"/>
        <end position="17"/>
    </location>
</feature>